<evidence type="ECO:0000255" key="1">
    <source>
        <dbReference type="HAMAP-Rule" id="MF_01217"/>
    </source>
</evidence>
<evidence type="ECO:0000255" key="2">
    <source>
        <dbReference type="PROSITE-ProRule" id="PRU00258"/>
    </source>
</evidence>
<accession>Q732M0</accession>
<dbReference type="EMBL" id="AE017194">
    <property type="protein sequence ID" value="AAS42797.1"/>
    <property type="molecule type" value="Genomic_DNA"/>
</dbReference>
<dbReference type="SMR" id="Q732M0"/>
<dbReference type="KEGG" id="bca:BCE_3892"/>
<dbReference type="HOGENOM" id="CLU_108696_5_3_9"/>
<dbReference type="UniPathway" id="UPA00094"/>
<dbReference type="Proteomes" id="UP000002527">
    <property type="component" value="Chromosome"/>
</dbReference>
<dbReference type="GO" id="GO:0005829">
    <property type="term" value="C:cytosol"/>
    <property type="evidence" value="ECO:0007669"/>
    <property type="project" value="TreeGrafter"/>
</dbReference>
<dbReference type="GO" id="GO:0016020">
    <property type="term" value="C:membrane"/>
    <property type="evidence" value="ECO:0007669"/>
    <property type="project" value="GOC"/>
</dbReference>
<dbReference type="GO" id="GO:0000035">
    <property type="term" value="F:acyl binding"/>
    <property type="evidence" value="ECO:0007669"/>
    <property type="project" value="TreeGrafter"/>
</dbReference>
<dbReference type="GO" id="GO:0000036">
    <property type="term" value="F:acyl carrier activity"/>
    <property type="evidence" value="ECO:0007669"/>
    <property type="project" value="UniProtKB-UniRule"/>
</dbReference>
<dbReference type="GO" id="GO:0009245">
    <property type="term" value="P:lipid A biosynthetic process"/>
    <property type="evidence" value="ECO:0007669"/>
    <property type="project" value="TreeGrafter"/>
</dbReference>
<dbReference type="FunFam" id="1.10.1200.10:FF:000001">
    <property type="entry name" value="Acyl carrier protein"/>
    <property type="match status" value="1"/>
</dbReference>
<dbReference type="Gene3D" id="1.10.1200.10">
    <property type="entry name" value="ACP-like"/>
    <property type="match status" value="1"/>
</dbReference>
<dbReference type="HAMAP" id="MF_01217">
    <property type="entry name" value="Acyl_carrier"/>
    <property type="match status" value="1"/>
</dbReference>
<dbReference type="InterPro" id="IPR003231">
    <property type="entry name" value="ACP"/>
</dbReference>
<dbReference type="InterPro" id="IPR036736">
    <property type="entry name" value="ACP-like_sf"/>
</dbReference>
<dbReference type="InterPro" id="IPR009081">
    <property type="entry name" value="PP-bd_ACP"/>
</dbReference>
<dbReference type="InterPro" id="IPR006162">
    <property type="entry name" value="Ppantetheine_attach_site"/>
</dbReference>
<dbReference type="NCBIfam" id="TIGR00517">
    <property type="entry name" value="acyl_carrier"/>
    <property type="match status" value="1"/>
</dbReference>
<dbReference type="NCBIfam" id="NF002148">
    <property type="entry name" value="PRK00982.1-2"/>
    <property type="match status" value="1"/>
</dbReference>
<dbReference type="NCBIfam" id="NF002149">
    <property type="entry name" value="PRK00982.1-3"/>
    <property type="match status" value="1"/>
</dbReference>
<dbReference type="NCBIfam" id="NF002150">
    <property type="entry name" value="PRK00982.1-4"/>
    <property type="match status" value="1"/>
</dbReference>
<dbReference type="NCBIfam" id="NF002151">
    <property type="entry name" value="PRK00982.1-5"/>
    <property type="match status" value="1"/>
</dbReference>
<dbReference type="PANTHER" id="PTHR20863">
    <property type="entry name" value="ACYL CARRIER PROTEIN"/>
    <property type="match status" value="1"/>
</dbReference>
<dbReference type="PANTHER" id="PTHR20863:SF76">
    <property type="entry name" value="CARRIER DOMAIN-CONTAINING PROTEIN"/>
    <property type="match status" value="1"/>
</dbReference>
<dbReference type="Pfam" id="PF00550">
    <property type="entry name" value="PP-binding"/>
    <property type="match status" value="1"/>
</dbReference>
<dbReference type="SUPFAM" id="SSF47336">
    <property type="entry name" value="ACP-like"/>
    <property type="match status" value="1"/>
</dbReference>
<dbReference type="PROSITE" id="PS50075">
    <property type="entry name" value="CARRIER"/>
    <property type="match status" value="1"/>
</dbReference>
<dbReference type="PROSITE" id="PS00012">
    <property type="entry name" value="PHOSPHOPANTETHEINE"/>
    <property type="match status" value="1"/>
</dbReference>
<proteinExistence type="inferred from homology"/>
<comment type="function">
    <text evidence="1">Carrier of the growing fatty acid chain in fatty acid biosynthesis.</text>
</comment>
<comment type="pathway">
    <text evidence="1">Lipid metabolism; fatty acid biosynthesis.</text>
</comment>
<comment type="subcellular location">
    <subcellularLocation>
        <location evidence="1">Cytoplasm</location>
    </subcellularLocation>
</comment>
<comment type="PTM">
    <text evidence="1">4'-phosphopantetheine is transferred from CoA to a specific serine of apo-ACP by AcpS. This modification is essential for activity because fatty acids are bound in thioester linkage to the sulfhydryl of the prosthetic group.</text>
</comment>
<comment type="similarity">
    <text evidence="1">Belongs to the acyl carrier protein (ACP) family.</text>
</comment>
<feature type="chain" id="PRO_0000180097" description="Acyl carrier protein">
    <location>
        <begin position="1"/>
        <end position="77"/>
    </location>
</feature>
<feature type="domain" description="Carrier" evidence="2">
    <location>
        <begin position="2"/>
        <end position="77"/>
    </location>
</feature>
<feature type="modified residue" description="O-(pantetheine 4'-phosphoryl)serine" evidence="2">
    <location>
        <position position="37"/>
    </location>
</feature>
<sequence length="77" mass="8513">MADVLERVTKIIVDRLGVEETEVVPAASFKEDLGADSLDVVELVMQLEDEFEMEISDEDAEKIATVGDAVTYIESHL</sequence>
<name>ACP_BACC1</name>
<gene>
    <name evidence="1" type="primary">acpP</name>
    <name type="synonym">acpA</name>
    <name type="ordered locus">BCE_3892</name>
</gene>
<reference key="1">
    <citation type="journal article" date="2004" name="Nucleic Acids Res.">
        <title>The genome sequence of Bacillus cereus ATCC 10987 reveals metabolic adaptations and a large plasmid related to Bacillus anthracis pXO1.</title>
        <authorList>
            <person name="Rasko D.A."/>
            <person name="Ravel J."/>
            <person name="Oekstad O.A."/>
            <person name="Helgason E."/>
            <person name="Cer R.Z."/>
            <person name="Jiang L."/>
            <person name="Shores K.A."/>
            <person name="Fouts D.E."/>
            <person name="Tourasse N.J."/>
            <person name="Angiuoli S.V."/>
            <person name="Kolonay J.F."/>
            <person name="Nelson W.C."/>
            <person name="Kolstoe A.-B."/>
            <person name="Fraser C.M."/>
            <person name="Read T.D."/>
        </authorList>
    </citation>
    <scope>NUCLEOTIDE SEQUENCE [LARGE SCALE GENOMIC DNA]</scope>
    <source>
        <strain>ATCC 10987 / NRS 248</strain>
    </source>
</reference>
<keyword id="KW-0963">Cytoplasm</keyword>
<keyword id="KW-0275">Fatty acid biosynthesis</keyword>
<keyword id="KW-0276">Fatty acid metabolism</keyword>
<keyword id="KW-0444">Lipid biosynthesis</keyword>
<keyword id="KW-0443">Lipid metabolism</keyword>
<keyword id="KW-0596">Phosphopantetheine</keyword>
<keyword id="KW-0597">Phosphoprotein</keyword>
<protein>
    <recommendedName>
        <fullName evidence="1">Acyl carrier protein</fullName>
        <shortName evidence="1">ACP</shortName>
    </recommendedName>
</protein>
<organism>
    <name type="scientific">Bacillus cereus (strain ATCC 10987 / NRS 248)</name>
    <dbReference type="NCBI Taxonomy" id="222523"/>
    <lineage>
        <taxon>Bacteria</taxon>
        <taxon>Bacillati</taxon>
        <taxon>Bacillota</taxon>
        <taxon>Bacilli</taxon>
        <taxon>Bacillales</taxon>
        <taxon>Bacillaceae</taxon>
        <taxon>Bacillus</taxon>
        <taxon>Bacillus cereus group</taxon>
    </lineage>
</organism>